<evidence type="ECO:0000255" key="1">
    <source>
        <dbReference type="HAMAP-Rule" id="MF_00258"/>
    </source>
</evidence>
<evidence type="ECO:0000256" key="2">
    <source>
        <dbReference type="SAM" id="MobiDB-lite"/>
    </source>
</evidence>
<keyword id="KW-0133">Cell shape</keyword>
<keyword id="KW-0961">Cell wall biogenesis/degradation</keyword>
<keyword id="KW-0413">Isomerase</keyword>
<keyword id="KW-0573">Peptidoglycan synthesis</keyword>
<proteinExistence type="inferred from homology"/>
<organism>
    <name type="scientific">Yersinia pseudotuberculosis serotype O:3 (strain YPIII)</name>
    <dbReference type="NCBI Taxonomy" id="502800"/>
    <lineage>
        <taxon>Bacteria</taxon>
        <taxon>Pseudomonadati</taxon>
        <taxon>Pseudomonadota</taxon>
        <taxon>Gammaproteobacteria</taxon>
        <taxon>Enterobacterales</taxon>
        <taxon>Yersiniaceae</taxon>
        <taxon>Yersinia</taxon>
    </lineage>
</organism>
<reference key="1">
    <citation type="submission" date="2008-02" db="EMBL/GenBank/DDBJ databases">
        <title>Complete sequence of Yersinia pseudotuberculosis YPIII.</title>
        <authorList>
            <consortium name="US DOE Joint Genome Institute"/>
            <person name="Copeland A."/>
            <person name="Lucas S."/>
            <person name="Lapidus A."/>
            <person name="Glavina del Rio T."/>
            <person name="Dalin E."/>
            <person name="Tice H."/>
            <person name="Bruce D."/>
            <person name="Goodwin L."/>
            <person name="Pitluck S."/>
            <person name="Munk A.C."/>
            <person name="Brettin T."/>
            <person name="Detter J.C."/>
            <person name="Han C."/>
            <person name="Tapia R."/>
            <person name="Schmutz J."/>
            <person name="Larimer F."/>
            <person name="Land M."/>
            <person name="Hauser L."/>
            <person name="Challacombe J.F."/>
            <person name="Green L."/>
            <person name="Lindler L.E."/>
            <person name="Nikolich M.P."/>
            <person name="Richardson P."/>
        </authorList>
    </citation>
    <scope>NUCLEOTIDE SEQUENCE [LARGE SCALE GENOMIC DNA]</scope>
    <source>
        <strain>YPIII</strain>
    </source>
</reference>
<accession>B1JQ44</accession>
<protein>
    <recommendedName>
        <fullName evidence="1">Glutamate racemase</fullName>
        <ecNumber evidence="1">5.1.1.3</ecNumber>
    </recommendedName>
</protein>
<feature type="chain" id="PRO_1000114076" description="Glutamate racemase">
    <location>
        <begin position="1"/>
        <end position="287"/>
    </location>
</feature>
<feature type="region of interest" description="Disordered" evidence="2">
    <location>
        <begin position="1"/>
        <end position="25"/>
    </location>
</feature>
<feature type="compositionally biased region" description="Polar residues" evidence="2">
    <location>
        <begin position="1"/>
        <end position="15"/>
    </location>
</feature>
<feature type="active site" description="Proton donor/acceptor" evidence="1">
    <location>
        <position position="96"/>
    </location>
</feature>
<feature type="active site" description="Proton donor/acceptor" evidence="1">
    <location>
        <position position="208"/>
    </location>
</feature>
<feature type="binding site" evidence="1">
    <location>
        <begin position="32"/>
        <end position="33"/>
    </location>
    <ligand>
        <name>substrate</name>
    </ligand>
</feature>
<feature type="binding site" evidence="1">
    <location>
        <begin position="64"/>
        <end position="65"/>
    </location>
    <ligand>
        <name>substrate</name>
    </ligand>
</feature>
<feature type="binding site" evidence="1">
    <location>
        <begin position="97"/>
        <end position="98"/>
    </location>
    <ligand>
        <name>substrate</name>
    </ligand>
</feature>
<feature type="binding site" evidence="1">
    <location>
        <begin position="209"/>
        <end position="210"/>
    </location>
    <ligand>
        <name>substrate</name>
    </ligand>
</feature>
<dbReference type="EC" id="5.1.1.3" evidence="1"/>
<dbReference type="EMBL" id="CP000950">
    <property type="protein sequence ID" value="ACA70331.1"/>
    <property type="molecule type" value="Genomic_DNA"/>
</dbReference>
<dbReference type="RefSeq" id="WP_012304744.1">
    <property type="nucleotide sequence ID" value="NZ_CP009792.1"/>
</dbReference>
<dbReference type="SMR" id="B1JQ44"/>
<dbReference type="KEGG" id="ypy:YPK_4072"/>
<dbReference type="PATRIC" id="fig|502800.11.peg.421"/>
<dbReference type="UniPathway" id="UPA00219"/>
<dbReference type="GO" id="GO:0008881">
    <property type="term" value="F:glutamate racemase activity"/>
    <property type="evidence" value="ECO:0007669"/>
    <property type="project" value="UniProtKB-UniRule"/>
</dbReference>
<dbReference type="GO" id="GO:0071555">
    <property type="term" value="P:cell wall organization"/>
    <property type="evidence" value="ECO:0007669"/>
    <property type="project" value="UniProtKB-KW"/>
</dbReference>
<dbReference type="GO" id="GO:0009252">
    <property type="term" value="P:peptidoglycan biosynthetic process"/>
    <property type="evidence" value="ECO:0007669"/>
    <property type="project" value="UniProtKB-UniRule"/>
</dbReference>
<dbReference type="GO" id="GO:0008360">
    <property type="term" value="P:regulation of cell shape"/>
    <property type="evidence" value="ECO:0007669"/>
    <property type="project" value="UniProtKB-KW"/>
</dbReference>
<dbReference type="FunFam" id="3.40.50.1860:FF:000002">
    <property type="entry name" value="Glutamate racemase"/>
    <property type="match status" value="1"/>
</dbReference>
<dbReference type="Gene3D" id="3.40.50.1860">
    <property type="match status" value="2"/>
</dbReference>
<dbReference type="HAMAP" id="MF_00258">
    <property type="entry name" value="Glu_racemase"/>
    <property type="match status" value="1"/>
</dbReference>
<dbReference type="InterPro" id="IPR015942">
    <property type="entry name" value="Asp/Glu/hydantoin_racemase"/>
</dbReference>
<dbReference type="InterPro" id="IPR001920">
    <property type="entry name" value="Asp/Glu_race"/>
</dbReference>
<dbReference type="InterPro" id="IPR018187">
    <property type="entry name" value="Asp/Glu_racemase_AS_1"/>
</dbReference>
<dbReference type="InterPro" id="IPR033134">
    <property type="entry name" value="Asp/Glu_racemase_AS_2"/>
</dbReference>
<dbReference type="InterPro" id="IPR004391">
    <property type="entry name" value="Glu_race"/>
</dbReference>
<dbReference type="NCBIfam" id="TIGR00067">
    <property type="entry name" value="glut_race"/>
    <property type="match status" value="1"/>
</dbReference>
<dbReference type="NCBIfam" id="NF002034">
    <property type="entry name" value="PRK00865.1-1"/>
    <property type="match status" value="1"/>
</dbReference>
<dbReference type="PANTHER" id="PTHR21198">
    <property type="entry name" value="GLUTAMATE RACEMASE"/>
    <property type="match status" value="1"/>
</dbReference>
<dbReference type="PANTHER" id="PTHR21198:SF2">
    <property type="entry name" value="GLUTAMATE RACEMASE"/>
    <property type="match status" value="1"/>
</dbReference>
<dbReference type="Pfam" id="PF01177">
    <property type="entry name" value="Asp_Glu_race"/>
    <property type="match status" value="1"/>
</dbReference>
<dbReference type="SUPFAM" id="SSF53681">
    <property type="entry name" value="Aspartate/glutamate racemase"/>
    <property type="match status" value="2"/>
</dbReference>
<dbReference type="PROSITE" id="PS00923">
    <property type="entry name" value="ASP_GLU_RACEMASE_1"/>
    <property type="match status" value="1"/>
</dbReference>
<dbReference type="PROSITE" id="PS00924">
    <property type="entry name" value="ASP_GLU_RACEMASE_2"/>
    <property type="match status" value="1"/>
</dbReference>
<gene>
    <name evidence="1" type="primary">murI</name>
    <name type="ordered locus">YPK_4072</name>
</gene>
<sequence>MATKPQDANTTSREAITSKADSPPRPTALIFDSGVGGLSVYQEIRQLLPNLHYIYAFDNVAFPYGEKSGEFIVERVLEIVTAVQQRHPLAIVVIACNTASTVSLPALRERFAFPVVGVVPAIKPAVRLTRNGVVGLLATRATVHASYTLDLIARFATDCKIELLGSSELVEVAETKLHGGVVPLEVLKKILHPWLSMREPPDTIVLGCTHFPLLTEELAQVLPEGTRMVDSGAAIARRTAWLISSQENVVSSQDENIAYCMALDEDTDALLPVLQSYGFPKLQKLPI</sequence>
<name>MURI_YERPY</name>
<comment type="function">
    <text evidence="1">Provides the (R)-glutamate required for cell wall biosynthesis.</text>
</comment>
<comment type="catalytic activity">
    <reaction evidence="1">
        <text>L-glutamate = D-glutamate</text>
        <dbReference type="Rhea" id="RHEA:12813"/>
        <dbReference type="ChEBI" id="CHEBI:29985"/>
        <dbReference type="ChEBI" id="CHEBI:29986"/>
        <dbReference type="EC" id="5.1.1.3"/>
    </reaction>
</comment>
<comment type="pathway">
    <text evidence="1">Cell wall biogenesis; peptidoglycan biosynthesis.</text>
</comment>
<comment type="similarity">
    <text evidence="1">Belongs to the aspartate/glutamate racemases family.</text>
</comment>